<keyword id="KW-0614">Plasmid</keyword>
<protein>
    <recommendedName>
        <fullName>Putative uncharacterized protein ORF9</fullName>
    </recommendedName>
</protein>
<proteinExistence type="predicted"/>
<name>YPI9_CLOPF</name>
<geneLocation type="plasmid">
    <name>pIP404</name>
</geneLocation>
<sequence>MIWSKLSSSINYYINKRIWGEELLKENILLLNQYIEDAFILEDGIYKYLDKKTYEYIDLSEEDMKKIEEAFIERLEKKRKVNKDKENFKNHMIMITEYLENEKSKEKSNVIELKNYRK</sequence>
<accession>P18019</accession>
<reference key="1">
    <citation type="journal article" date="1988" name="Plasmid">
        <title>Complete nucleotide sequence and genetic organization of the bacteriocinogenic plasmid, pIP404, from Clostridium perfringens.</title>
        <authorList>
            <person name="Garnier T."/>
            <person name="Cole S.T."/>
        </authorList>
    </citation>
    <scope>NUCLEOTIDE SEQUENCE [GENOMIC DNA]</scope>
    <source>
        <strain>CPN50</strain>
    </source>
</reference>
<feature type="chain" id="PRO_0000208258" description="Putative uncharacterized protein ORF9">
    <location>
        <begin position="1"/>
        <end position="118"/>
    </location>
</feature>
<dbReference type="EMBL" id="M32882">
    <property type="protein sequence ID" value="AAA98255.1"/>
    <property type="molecule type" value="Genomic_DNA"/>
</dbReference>
<dbReference type="PIR" id="JT0369">
    <property type="entry name" value="JT0369"/>
</dbReference>
<dbReference type="RefSeq" id="NP_040457.1">
    <property type="nucleotide sequence ID" value="NC_001388.1"/>
</dbReference>
<dbReference type="RefSeq" id="WP_010889929.1">
    <property type="nucleotide sequence ID" value="NC_001388.1"/>
</dbReference>
<dbReference type="SMR" id="P18019"/>
<organism>
    <name type="scientific">Clostridium perfringens</name>
    <dbReference type="NCBI Taxonomy" id="1502"/>
    <lineage>
        <taxon>Bacteria</taxon>
        <taxon>Bacillati</taxon>
        <taxon>Bacillota</taxon>
        <taxon>Clostridia</taxon>
        <taxon>Eubacteriales</taxon>
        <taxon>Clostridiaceae</taxon>
        <taxon>Clostridium</taxon>
    </lineage>
</organism>